<dbReference type="EC" id="6.3.1.21" evidence="1"/>
<dbReference type="EMBL" id="CP000901">
    <property type="protein sequence ID" value="ABX86790.1"/>
    <property type="molecule type" value="Genomic_DNA"/>
</dbReference>
<dbReference type="RefSeq" id="WP_002211083.1">
    <property type="nucleotide sequence ID" value="NZ_CP009935.1"/>
</dbReference>
<dbReference type="SMR" id="A9R5W9"/>
<dbReference type="GeneID" id="57976805"/>
<dbReference type="KEGG" id="ypg:YpAngola_A1634"/>
<dbReference type="PATRIC" id="fig|349746.12.peg.2603"/>
<dbReference type="UniPathway" id="UPA00074">
    <property type="reaction ID" value="UER00127"/>
</dbReference>
<dbReference type="GO" id="GO:0005829">
    <property type="term" value="C:cytosol"/>
    <property type="evidence" value="ECO:0007669"/>
    <property type="project" value="TreeGrafter"/>
</dbReference>
<dbReference type="GO" id="GO:0005524">
    <property type="term" value="F:ATP binding"/>
    <property type="evidence" value="ECO:0007669"/>
    <property type="project" value="UniProtKB-UniRule"/>
</dbReference>
<dbReference type="GO" id="GO:0000287">
    <property type="term" value="F:magnesium ion binding"/>
    <property type="evidence" value="ECO:0007669"/>
    <property type="project" value="InterPro"/>
</dbReference>
<dbReference type="GO" id="GO:0043815">
    <property type="term" value="F:phosphoribosylglycinamide formyltransferase 2 activity"/>
    <property type="evidence" value="ECO:0007669"/>
    <property type="project" value="UniProtKB-UniRule"/>
</dbReference>
<dbReference type="GO" id="GO:0004644">
    <property type="term" value="F:phosphoribosylglycinamide formyltransferase activity"/>
    <property type="evidence" value="ECO:0007669"/>
    <property type="project" value="InterPro"/>
</dbReference>
<dbReference type="GO" id="GO:0006189">
    <property type="term" value="P:'de novo' IMP biosynthetic process"/>
    <property type="evidence" value="ECO:0007669"/>
    <property type="project" value="UniProtKB-UniRule"/>
</dbReference>
<dbReference type="FunFam" id="3.30.1490.20:FF:000013">
    <property type="entry name" value="Formate-dependent phosphoribosylglycinamide formyltransferase"/>
    <property type="match status" value="1"/>
</dbReference>
<dbReference type="FunFam" id="3.30.470.20:FF:000027">
    <property type="entry name" value="Formate-dependent phosphoribosylglycinamide formyltransferase"/>
    <property type="match status" value="1"/>
</dbReference>
<dbReference type="FunFam" id="3.40.50.20:FF:000007">
    <property type="entry name" value="Formate-dependent phosphoribosylglycinamide formyltransferase"/>
    <property type="match status" value="1"/>
</dbReference>
<dbReference type="Gene3D" id="3.40.50.20">
    <property type="match status" value="1"/>
</dbReference>
<dbReference type="Gene3D" id="3.30.1490.20">
    <property type="entry name" value="ATP-grasp fold, A domain"/>
    <property type="match status" value="1"/>
</dbReference>
<dbReference type="Gene3D" id="3.30.470.20">
    <property type="entry name" value="ATP-grasp fold, B domain"/>
    <property type="match status" value="1"/>
</dbReference>
<dbReference type="HAMAP" id="MF_01643">
    <property type="entry name" value="PurT"/>
    <property type="match status" value="1"/>
</dbReference>
<dbReference type="InterPro" id="IPR011761">
    <property type="entry name" value="ATP-grasp"/>
</dbReference>
<dbReference type="InterPro" id="IPR003135">
    <property type="entry name" value="ATP-grasp_carboxylate-amine"/>
</dbReference>
<dbReference type="InterPro" id="IPR013815">
    <property type="entry name" value="ATP_grasp_subdomain_1"/>
</dbReference>
<dbReference type="InterPro" id="IPR016185">
    <property type="entry name" value="PreATP-grasp_dom_sf"/>
</dbReference>
<dbReference type="InterPro" id="IPR005862">
    <property type="entry name" value="PurT"/>
</dbReference>
<dbReference type="InterPro" id="IPR054350">
    <property type="entry name" value="PurT/PurK_preATP-grasp"/>
</dbReference>
<dbReference type="InterPro" id="IPR048740">
    <property type="entry name" value="PurT_C"/>
</dbReference>
<dbReference type="InterPro" id="IPR011054">
    <property type="entry name" value="Rudment_hybrid_motif"/>
</dbReference>
<dbReference type="NCBIfam" id="NF006766">
    <property type="entry name" value="PRK09288.1"/>
    <property type="match status" value="1"/>
</dbReference>
<dbReference type="NCBIfam" id="TIGR01142">
    <property type="entry name" value="purT"/>
    <property type="match status" value="1"/>
</dbReference>
<dbReference type="PANTHER" id="PTHR43055">
    <property type="entry name" value="FORMATE-DEPENDENT PHOSPHORIBOSYLGLYCINAMIDE FORMYLTRANSFERASE"/>
    <property type="match status" value="1"/>
</dbReference>
<dbReference type="PANTHER" id="PTHR43055:SF1">
    <property type="entry name" value="FORMATE-DEPENDENT PHOSPHORIBOSYLGLYCINAMIDE FORMYLTRANSFERASE"/>
    <property type="match status" value="1"/>
</dbReference>
<dbReference type="Pfam" id="PF02222">
    <property type="entry name" value="ATP-grasp"/>
    <property type="match status" value="1"/>
</dbReference>
<dbReference type="Pfam" id="PF21244">
    <property type="entry name" value="PurT_C"/>
    <property type="match status" value="1"/>
</dbReference>
<dbReference type="Pfam" id="PF22660">
    <property type="entry name" value="RS_preATP-grasp-like"/>
    <property type="match status" value="1"/>
</dbReference>
<dbReference type="SUPFAM" id="SSF56059">
    <property type="entry name" value="Glutathione synthetase ATP-binding domain-like"/>
    <property type="match status" value="1"/>
</dbReference>
<dbReference type="SUPFAM" id="SSF52440">
    <property type="entry name" value="PreATP-grasp domain"/>
    <property type="match status" value="1"/>
</dbReference>
<dbReference type="SUPFAM" id="SSF51246">
    <property type="entry name" value="Rudiment single hybrid motif"/>
    <property type="match status" value="1"/>
</dbReference>
<dbReference type="PROSITE" id="PS50975">
    <property type="entry name" value="ATP_GRASP"/>
    <property type="match status" value="1"/>
</dbReference>
<proteinExistence type="inferred from homology"/>
<gene>
    <name evidence="1" type="primary">purT</name>
    <name type="ordered locus">YpAngola_A1634</name>
</gene>
<protein>
    <recommendedName>
        <fullName evidence="1">Formate-dependent phosphoribosylglycinamide formyltransferase</fullName>
        <ecNumber evidence="1">6.3.1.21</ecNumber>
    </recommendedName>
    <alternativeName>
        <fullName evidence="1">5'-phosphoribosylglycinamide transformylase 2</fullName>
    </alternativeName>
    <alternativeName>
        <fullName evidence="1">Formate-dependent GAR transformylase</fullName>
    </alternativeName>
    <alternativeName>
        <fullName evidence="1">GAR transformylase 2</fullName>
        <shortName evidence="1">GART 2</shortName>
    </alternativeName>
    <alternativeName>
        <fullName evidence="1">Non-folate glycinamide ribonucleotide transformylase</fullName>
    </alternativeName>
    <alternativeName>
        <fullName evidence="1">Phosphoribosylglycinamide formyltransferase 2</fullName>
    </alternativeName>
</protein>
<keyword id="KW-0067">ATP-binding</keyword>
<keyword id="KW-0436">Ligase</keyword>
<keyword id="KW-0460">Magnesium</keyword>
<keyword id="KW-0479">Metal-binding</keyword>
<keyword id="KW-0547">Nucleotide-binding</keyword>
<keyword id="KW-0658">Purine biosynthesis</keyword>
<accession>A9R5W9</accession>
<evidence type="ECO:0000255" key="1">
    <source>
        <dbReference type="HAMAP-Rule" id="MF_01643"/>
    </source>
</evidence>
<feature type="chain" id="PRO_1000186905" description="Formate-dependent phosphoribosylglycinamide formyltransferase">
    <location>
        <begin position="1"/>
        <end position="393"/>
    </location>
</feature>
<feature type="domain" description="ATP-grasp" evidence="1">
    <location>
        <begin position="119"/>
        <end position="308"/>
    </location>
</feature>
<feature type="binding site" evidence="1">
    <location>
        <begin position="22"/>
        <end position="23"/>
    </location>
    <ligand>
        <name>N(1)-(5-phospho-beta-D-ribosyl)glycinamide</name>
        <dbReference type="ChEBI" id="CHEBI:143788"/>
    </ligand>
</feature>
<feature type="binding site" evidence="1">
    <location>
        <position position="82"/>
    </location>
    <ligand>
        <name>N(1)-(5-phospho-beta-D-ribosyl)glycinamide</name>
        <dbReference type="ChEBI" id="CHEBI:143788"/>
    </ligand>
</feature>
<feature type="binding site" evidence="1">
    <location>
        <position position="114"/>
    </location>
    <ligand>
        <name>ATP</name>
        <dbReference type="ChEBI" id="CHEBI:30616"/>
    </ligand>
</feature>
<feature type="binding site" evidence="1">
    <location>
        <position position="155"/>
    </location>
    <ligand>
        <name>ATP</name>
        <dbReference type="ChEBI" id="CHEBI:30616"/>
    </ligand>
</feature>
<feature type="binding site" evidence="1">
    <location>
        <begin position="160"/>
        <end position="165"/>
    </location>
    <ligand>
        <name>ATP</name>
        <dbReference type="ChEBI" id="CHEBI:30616"/>
    </ligand>
</feature>
<feature type="binding site" evidence="1">
    <location>
        <begin position="195"/>
        <end position="198"/>
    </location>
    <ligand>
        <name>ATP</name>
        <dbReference type="ChEBI" id="CHEBI:30616"/>
    </ligand>
</feature>
<feature type="binding site" evidence="1">
    <location>
        <position position="203"/>
    </location>
    <ligand>
        <name>ATP</name>
        <dbReference type="ChEBI" id="CHEBI:30616"/>
    </ligand>
</feature>
<feature type="binding site" evidence="1">
    <location>
        <position position="267"/>
    </location>
    <ligand>
        <name>Mg(2+)</name>
        <dbReference type="ChEBI" id="CHEBI:18420"/>
    </ligand>
</feature>
<feature type="binding site" evidence="1">
    <location>
        <position position="279"/>
    </location>
    <ligand>
        <name>Mg(2+)</name>
        <dbReference type="ChEBI" id="CHEBI:18420"/>
    </ligand>
</feature>
<feature type="binding site" evidence="1">
    <location>
        <position position="286"/>
    </location>
    <ligand>
        <name>N(1)-(5-phospho-beta-D-ribosyl)glycinamide</name>
        <dbReference type="ChEBI" id="CHEBI:143788"/>
    </ligand>
</feature>
<feature type="binding site" evidence="1">
    <location>
        <position position="355"/>
    </location>
    <ligand>
        <name>N(1)-(5-phospho-beta-D-ribosyl)glycinamide</name>
        <dbReference type="ChEBI" id="CHEBI:143788"/>
    </ligand>
</feature>
<feature type="binding site" evidence="1">
    <location>
        <begin position="362"/>
        <end position="363"/>
    </location>
    <ligand>
        <name>N(1)-(5-phospho-beta-D-ribosyl)glycinamide</name>
        <dbReference type="ChEBI" id="CHEBI:143788"/>
    </ligand>
</feature>
<comment type="function">
    <text evidence="1">Involved in the de novo purine biosynthesis. Catalyzes the transfer of formate to 5-phospho-ribosyl-glycinamide (GAR), producing 5-phospho-ribosyl-N-formylglycinamide (FGAR). Formate is provided by PurU via hydrolysis of 10-formyl-tetrahydrofolate.</text>
</comment>
<comment type="catalytic activity">
    <reaction evidence="1">
        <text>N(1)-(5-phospho-beta-D-ribosyl)glycinamide + formate + ATP = N(2)-formyl-N(1)-(5-phospho-beta-D-ribosyl)glycinamide + ADP + phosphate + H(+)</text>
        <dbReference type="Rhea" id="RHEA:24829"/>
        <dbReference type="ChEBI" id="CHEBI:15378"/>
        <dbReference type="ChEBI" id="CHEBI:15740"/>
        <dbReference type="ChEBI" id="CHEBI:30616"/>
        <dbReference type="ChEBI" id="CHEBI:43474"/>
        <dbReference type="ChEBI" id="CHEBI:143788"/>
        <dbReference type="ChEBI" id="CHEBI:147286"/>
        <dbReference type="ChEBI" id="CHEBI:456216"/>
        <dbReference type="EC" id="6.3.1.21"/>
    </reaction>
    <physiologicalReaction direction="left-to-right" evidence="1">
        <dbReference type="Rhea" id="RHEA:24830"/>
    </physiologicalReaction>
</comment>
<comment type="pathway">
    <text evidence="1">Purine metabolism; IMP biosynthesis via de novo pathway; N(2)-formyl-N(1)-(5-phospho-D-ribosyl)glycinamide from N(1)-(5-phospho-D-ribosyl)glycinamide (formate route): step 1/1.</text>
</comment>
<comment type="subunit">
    <text evidence="1">Homodimer.</text>
</comment>
<comment type="similarity">
    <text evidence="1">Belongs to the PurK/PurT family.</text>
</comment>
<name>PURT_YERPG</name>
<organism>
    <name type="scientific">Yersinia pestis bv. Antiqua (strain Angola)</name>
    <dbReference type="NCBI Taxonomy" id="349746"/>
    <lineage>
        <taxon>Bacteria</taxon>
        <taxon>Pseudomonadati</taxon>
        <taxon>Pseudomonadota</taxon>
        <taxon>Gammaproteobacteria</taxon>
        <taxon>Enterobacterales</taxon>
        <taxon>Yersiniaceae</taxon>
        <taxon>Yersinia</taxon>
    </lineage>
</organism>
<reference key="1">
    <citation type="journal article" date="2010" name="J. Bacteriol.">
        <title>Genome sequence of the deep-rooted Yersinia pestis strain Angola reveals new insights into the evolution and pangenome of the plague bacterium.</title>
        <authorList>
            <person name="Eppinger M."/>
            <person name="Worsham P.L."/>
            <person name="Nikolich M.P."/>
            <person name="Riley D.R."/>
            <person name="Sebastian Y."/>
            <person name="Mou S."/>
            <person name="Achtman M."/>
            <person name="Lindler L.E."/>
            <person name="Ravel J."/>
        </authorList>
    </citation>
    <scope>NUCLEOTIDE SEQUENCE [LARGE SCALE GENOMIC DNA]</scope>
    <source>
        <strain>Angola</strain>
    </source>
</reference>
<sequence>MLTIGTALRPGATRVMLLGAGELGKEVAIECQRLGLEVIAVDRYADAPAMHVAHRSHVINMLDGAALKQLVAQEKPHYIVPEIEAIATDMLVELEKMGQHVVPCAEATRLTMNREGIRRLAAETLQLPTSSYRFADTDSAFFQAVRDIGYPCIVKPVMSSSGKGQSLIRSEEHLQAAWEYAQQGGRAGSGRVIIEGLVHFDFEITLLTIRAVDGIHFCAPIGHRQEDGDYRESWQPQAMSDIALQRAKEISAQVVTALGGFGLFGVELFVCGDDVIFSEVSPRPHDTGMVTLISQNMSEFALHVRAFLGLPIGTIRQYGAAASAVILPELTSQNITYRGLETALIGDTQIRLFGKPEIAGKRRLGVALAVADNIETAIEVAKKAAGNIEVSGE</sequence>